<protein>
    <recommendedName>
        <fullName evidence="1">Large ribosomal subunit protein bL28</fullName>
    </recommendedName>
    <alternativeName>
        <fullName evidence="2">50S ribosomal protein L28</fullName>
    </alternativeName>
</protein>
<accession>Q47BA8</accession>
<sequence>MARVCQVTGKAPMVGNKVSHANNRTKRRFLPNLQYRRFWVESENRFLRLRVSNAGLRLIDKNGIDAVLADLRARGEV</sequence>
<comment type="similarity">
    <text evidence="1">Belongs to the bacterial ribosomal protein bL28 family.</text>
</comment>
<organism>
    <name type="scientific">Dechloromonas aromatica (strain RCB)</name>
    <dbReference type="NCBI Taxonomy" id="159087"/>
    <lineage>
        <taxon>Bacteria</taxon>
        <taxon>Pseudomonadati</taxon>
        <taxon>Pseudomonadota</taxon>
        <taxon>Betaproteobacteria</taxon>
        <taxon>Rhodocyclales</taxon>
        <taxon>Azonexaceae</taxon>
        <taxon>Dechloromonas</taxon>
    </lineage>
</organism>
<name>RL28_DECAR</name>
<gene>
    <name evidence="1" type="primary">rpmB</name>
    <name type="ordered locus">Daro_3143</name>
</gene>
<proteinExistence type="inferred from homology"/>
<reference key="1">
    <citation type="journal article" date="2009" name="BMC Genomics">
        <title>Metabolic analysis of the soil microbe Dechloromonas aromatica str. RCB: indications of a surprisingly complex life-style and cryptic anaerobic pathways for aromatic degradation.</title>
        <authorList>
            <person name="Salinero K.K."/>
            <person name="Keller K."/>
            <person name="Feil W.S."/>
            <person name="Feil H."/>
            <person name="Trong S."/>
            <person name="Di Bartolo G."/>
            <person name="Lapidus A."/>
        </authorList>
    </citation>
    <scope>NUCLEOTIDE SEQUENCE [LARGE SCALE GENOMIC DNA]</scope>
    <source>
        <strain>RCB</strain>
    </source>
</reference>
<dbReference type="EMBL" id="CP000089">
    <property type="protein sequence ID" value="AAZ47873.1"/>
    <property type="molecule type" value="Genomic_DNA"/>
</dbReference>
<dbReference type="SMR" id="Q47BA8"/>
<dbReference type="STRING" id="159087.Daro_3143"/>
<dbReference type="KEGG" id="dar:Daro_3143"/>
<dbReference type="eggNOG" id="COG0227">
    <property type="taxonomic scope" value="Bacteria"/>
</dbReference>
<dbReference type="HOGENOM" id="CLU_064548_3_1_4"/>
<dbReference type="OrthoDB" id="9805609at2"/>
<dbReference type="GO" id="GO:0022625">
    <property type="term" value="C:cytosolic large ribosomal subunit"/>
    <property type="evidence" value="ECO:0007669"/>
    <property type="project" value="TreeGrafter"/>
</dbReference>
<dbReference type="GO" id="GO:0003735">
    <property type="term" value="F:structural constituent of ribosome"/>
    <property type="evidence" value="ECO:0007669"/>
    <property type="project" value="InterPro"/>
</dbReference>
<dbReference type="GO" id="GO:0006412">
    <property type="term" value="P:translation"/>
    <property type="evidence" value="ECO:0007669"/>
    <property type="project" value="UniProtKB-UniRule"/>
</dbReference>
<dbReference type="FunFam" id="2.30.170.40:FF:000001">
    <property type="entry name" value="50S ribosomal protein L28"/>
    <property type="match status" value="1"/>
</dbReference>
<dbReference type="Gene3D" id="2.30.170.40">
    <property type="entry name" value="Ribosomal protein L28/L24"/>
    <property type="match status" value="1"/>
</dbReference>
<dbReference type="HAMAP" id="MF_00373">
    <property type="entry name" value="Ribosomal_bL28"/>
    <property type="match status" value="1"/>
</dbReference>
<dbReference type="InterPro" id="IPR026569">
    <property type="entry name" value="Ribosomal_bL28"/>
</dbReference>
<dbReference type="InterPro" id="IPR034704">
    <property type="entry name" value="Ribosomal_bL28/bL31-like_sf"/>
</dbReference>
<dbReference type="InterPro" id="IPR001383">
    <property type="entry name" value="Ribosomal_bL28_bact-type"/>
</dbReference>
<dbReference type="InterPro" id="IPR037147">
    <property type="entry name" value="Ribosomal_bL28_sf"/>
</dbReference>
<dbReference type="NCBIfam" id="TIGR00009">
    <property type="entry name" value="L28"/>
    <property type="match status" value="1"/>
</dbReference>
<dbReference type="PANTHER" id="PTHR13528">
    <property type="entry name" value="39S RIBOSOMAL PROTEIN L28, MITOCHONDRIAL"/>
    <property type="match status" value="1"/>
</dbReference>
<dbReference type="PANTHER" id="PTHR13528:SF2">
    <property type="entry name" value="LARGE RIBOSOMAL SUBUNIT PROTEIN BL28M"/>
    <property type="match status" value="1"/>
</dbReference>
<dbReference type="Pfam" id="PF00830">
    <property type="entry name" value="Ribosomal_L28"/>
    <property type="match status" value="1"/>
</dbReference>
<dbReference type="SUPFAM" id="SSF143800">
    <property type="entry name" value="L28p-like"/>
    <property type="match status" value="1"/>
</dbReference>
<feature type="chain" id="PRO_1000007223" description="Large ribosomal subunit protein bL28">
    <location>
        <begin position="1"/>
        <end position="77"/>
    </location>
</feature>
<evidence type="ECO:0000255" key="1">
    <source>
        <dbReference type="HAMAP-Rule" id="MF_00373"/>
    </source>
</evidence>
<evidence type="ECO:0000305" key="2"/>
<keyword id="KW-0687">Ribonucleoprotein</keyword>
<keyword id="KW-0689">Ribosomal protein</keyword>